<reference key="1">
    <citation type="journal article" date="2006" name="Genome Res.">
        <title>Massive genome erosion and functional adaptations provide insights into the symbiotic lifestyle of Sodalis glossinidius in the tsetse host.</title>
        <authorList>
            <person name="Toh H."/>
            <person name="Weiss B.L."/>
            <person name="Perkin S.A.H."/>
            <person name="Yamashita A."/>
            <person name="Oshima K."/>
            <person name="Hattori M."/>
            <person name="Aksoy S."/>
        </authorList>
    </citation>
    <scope>NUCLEOTIDE SEQUENCE [LARGE SCALE GENOMIC DNA]</scope>
    <source>
        <strain>morsitans</strain>
    </source>
</reference>
<organism>
    <name type="scientific">Sodalis glossinidius (strain morsitans)</name>
    <dbReference type="NCBI Taxonomy" id="343509"/>
    <lineage>
        <taxon>Bacteria</taxon>
        <taxon>Pseudomonadati</taxon>
        <taxon>Pseudomonadota</taxon>
        <taxon>Gammaproteobacteria</taxon>
        <taxon>Enterobacterales</taxon>
        <taxon>Bruguierivoracaceae</taxon>
        <taxon>Sodalis</taxon>
    </lineage>
</organism>
<comment type="function">
    <text evidence="1">Transfers and isomerizes the ribose moiety from AdoMet to the 7-aminomethyl group of 7-deazaguanine (preQ1-tRNA) to give epoxyqueuosine (oQ-tRNA).</text>
</comment>
<comment type="catalytic activity">
    <reaction evidence="1">
        <text>7-aminomethyl-7-carbaguanosine(34) in tRNA + S-adenosyl-L-methionine = epoxyqueuosine(34) in tRNA + adenine + L-methionine + 2 H(+)</text>
        <dbReference type="Rhea" id="RHEA:32155"/>
        <dbReference type="Rhea" id="RHEA-COMP:10342"/>
        <dbReference type="Rhea" id="RHEA-COMP:18582"/>
        <dbReference type="ChEBI" id="CHEBI:15378"/>
        <dbReference type="ChEBI" id="CHEBI:16708"/>
        <dbReference type="ChEBI" id="CHEBI:57844"/>
        <dbReference type="ChEBI" id="CHEBI:59789"/>
        <dbReference type="ChEBI" id="CHEBI:82833"/>
        <dbReference type="ChEBI" id="CHEBI:194443"/>
        <dbReference type="EC" id="2.4.99.17"/>
    </reaction>
</comment>
<comment type="pathway">
    <text evidence="1">tRNA modification; tRNA-queuosine biosynthesis.</text>
</comment>
<comment type="subunit">
    <text evidence="1">Monomer.</text>
</comment>
<comment type="subcellular location">
    <subcellularLocation>
        <location evidence="1">Cytoplasm</location>
    </subcellularLocation>
</comment>
<comment type="similarity">
    <text evidence="1">Belongs to the QueA family.</text>
</comment>
<keyword id="KW-0963">Cytoplasm</keyword>
<keyword id="KW-0671">Queuosine biosynthesis</keyword>
<keyword id="KW-0949">S-adenosyl-L-methionine</keyword>
<keyword id="KW-0808">Transferase</keyword>
<dbReference type="EC" id="2.4.99.17" evidence="1"/>
<dbReference type="EMBL" id="AP008232">
    <property type="protein sequence ID" value="BAE73920.1"/>
    <property type="molecule type" value="Genomic_DNA"/>
</dbReference>
<dbReference type="RefSeq" id="WP_011410398.1">
    <property type="nucleotide sequence ID" value="NC_007712.1"/>
</dbReference>
<dbReference type="SMR" id="Q2NVA5"/>
<dbReference type="STRING" id="343509.SG0645"/>
<dbReference type="KEGG" id="sgl:SG0645"/>
<dbReference type="eggNOG" id="COG0809">
    <property type="taxonomic scope" value="Bacteria"/>
</dbReference>
<dbReference type="HOGENOM" id="CLU_039110_1_0_6"/>
<dbReference type="OrthoDB" id="9805933at2"/>
<dbReference type="BioCyc" id="SGLO343509:SGP1_RS05620-MONOMER"/>
<dbReference type="UniPathway" id="UPA00392"/>
<dbReference type="Proteomes" id="UP000001932">
    <property type="component" value="Chromosome"/>
</dbReference>
<dbReference type="GO" id="GO:0005737">
    <property type="term" value="C:cytoplasm"/>
    <property type="evidence" value="ECO:0007669"/>
    <property type="project" value="UniProtKB-SubCell"/>
</dbReference>
<dbReference type="GO" id="GO:0051075">
    <property type="term" value="F:S-adenosylmethionine:tRNA ribosyltransferase-isomerase activity"/>
    <property type="evidence" value="ECO:0007669"/>
    <property type="project" value="UniProtKB-EC"/>
</dbReference>
<dbReference type="GO" id="GO:0008616">
    <property type="term" value="P:queuosine biosynthetic process"/>
    <property type="evidence" value="ECO:0007669"/>
    <property type="project" value="UniProtKB-UniRule"/>
</dbReference>
<dbReference type="GO" id="GO:0002099">
    <property type="term" value="P:tRNA wobble guanine modification"/>
    <property type="evidence" value="ECO:0007669"/>
    <property type="project" value="TreeGrafter"/>
</dbReference>
<dbReference type="FunFam" id="2.40.10.240:FF:000001">
    <property type="entry name" value="S-adenosylmethionine:tRNA ribosyltransferase-isomerase"/>
    <property type="match status" value="1"/>
</dbReference>
<dbReference type="FunFam" id="3.40.1780.10:FF:000001">
    <property type="entry name" value="S-adenosylmethionine:tRNA ribosyltransferase-isomerase"/>
    <property type="match status" value="1"/>
</dbReference>
<dbReference type="Gene3D" id="2.40.10.240">
    <property type="entry name" value="QueA-like"/>
    <property type="match status" value="1"/>
</dbReference>
<dbReference type="Gene3D" id="3.40.1780.10">
    <property type="entry name" value="QueA-like"/>
    <property type="match status" value="1"/>
</dbReference>
<dbReference type="HAMAP" id="MF_00113">
    <property type="entry name" value="QueA"/>
    <property type="match status" value="1"/>
</dbReference>
<dbReference type="InterPro" id="IPR003699">
    <property type="entry name" value="QueA"/>
</dbReference>
<dbReference type="InterPro" id="IPR042118">
    <property type="entry name" value="QueA_dom1"/>
</dbReference>
<dbReference type="InterPro" id="IPR042119">
    <property type="entry name" value="QueA_dom2"/>
</dbReference>
<dbReference type="InterPro" id="IPR036100">
    <property type="entry name" value="QueA_sf"/>
</dbReference>
<dbReference type="NCBIfam" id="NF001140">
    <property type="entry name" value="PRK00147.1"/>
    <property type="match status" value="1"/>
</dbReference>
<dbReference type="NCBIfam" id="TIGR00113">
    <property type="entry name" value="queA"/>
    <property type="match status" value="1"/>
</dbReference>
<dbReference type="PANTHER" id="PTHR30307">
    <property type="entry name" value="S-ADENOSYLMETHIONINE:TRNA RIBOSYLTRANSFERASE-ISOMERASE"/>
    <property type="match status" value="1"/>
</dbReference>
<dbReference type="PANTHER" id="PTHR30307:SF0">
    <property type="entry name" value="S-ADENOSYLMETHIONINE:TRNA RIBOSYLTRANSFERASE-ISOMERASE"/>
    <property type="match status" value="1"/>
</dbReference>
<dbReference type="Pfam" id="PF02547">
    <property type="entry name" value="Queuosine_synth"/>
    <property type="match status" value="1"/>
</dbReference>
<dbReference type="SUPFAM" id="SSF111337">
    <property type="entry name" value="QueA-like"/>
    <property type="match status" value="1"/>
</dbReference>
<sequence length="353" mass="38522">MRVADFSFALPDNLIARYPQAQRSACRLLSLDGQTGALAHQVFTDLLEELAPGDLLVFNNTRVIPARLFGRKVSGGKIEVLVERVLDDKRVLAHVRASKAPKPGSALLLGDDDSIAATMVARHDALFELRFDDARDVLTLLNDAGHMPLPPYIDRPDDVADRELYQTVYGERPGSVAAPTAGLHFDEPLLAALRAKGVEMAFVTLHVGAGTFQPVRVDQIEHHQMHSEYAEVPQEVVDAVLACKARGNRVVAVGTTAVRSLESAAAAGEQALTPFFGDTSIFIYTGYQFRVVDVLITNFHLPESTLIMLVSAFAGYRHTLAAYREAVAQAYRFFSYGDAMFITRNPAAAAERG</sequence>
<name>QUEA_SODGM</name>
<proteinExistence type="inferred from homology"/>
<evidence type="ECO:0000255" key="1">
    <source>
        <dbReference type="HAMAP-Rule" id="MF_00113"/>
    </source>
</evidence>
<accession>Q2NVA5</accession>
<protein>
    <recommendedName>
        <fullName evidence="1">S-adenosylmethionine:tRNA ribosyltransferase-isomerase</fullName>
        <ecNumber evidence="1">2.4.99.17</ecNumber>
    </recommendedName>
    <alternativeName>
        <fullName evidence="1">Queuosine biosynthesis protein QueA</fullName>
    </alternativeName>
</protein>
<gene>
    <name evidence="1" type="primary">queA</name>
    <name type="ordered locus">SG0645</name>
</gene>
<feature type="chain" id="PRO_1000015281" description="S-adenosylmethionine:tRNA ribosyltransferase-isomerase">
    <location>
        <begin position="1"/>
        <end position="353"/>
    </location>
</feature>